<gene>
    <name type="ordered locus">slr1534</name>
</gene>
<keyword id="KW-0121">Carboxypeptidase</keyword>
<keyword id="KW-0378">Hydrolase</keyword>
<keyword id="KW-0645">Protease</keyword>
<keyword id="KW-1185">Reference proteome</keyword>
<keyword id="KW-0720">Serine protease</keyword>
<dbReference type="EC" id="3.4.16.-"/>
<dbReference type="EMBL" id="BA000022">
    <property type="protein sequence ID" value="BAA18314.1"/>
    <property type="molecule type" value="Genomic_DNA"/>
</dbReference>
<dbReference type="PIR" id="S75855">
    <property type="entry name" value="S75855"/>
</dbReference>
<dbReference type="SMR" id="P74220"/>
<dbReference type="FunCoup" id="P74220">
    <property type="interactions" value="68"/>
</dbReference>
<dbReference type="IntAct" id="P74220">
    <property type="interactions" value="1"/>
</dbReference>
<dbReference type="STRING" id="1148.gene:10499190"/>
<dbReference type="MEROPS" id="S66.001"/>
<dbReference type="PaxDb" id="1148-1653400"/>
<dbReference type="EnsemblBacteria" id="BAA18314">
    <property type="protein sequence ID" value="BAA18314"/>
    <property type="gene ID" value="BAA18314"/>
</dbReference>
<dbReference type="KEGG" id="syn:slr1534"/>
<dbReference type="eggNOG" id="COG1619">
    <property type="taxonomic scope" value="Bacteria"/>
</dbReference>
<dbReference type="InParanoid" id="P74220"/>
<dbReference type="PhylomeDB" id="P74220"/>
<dbReference type="Proteomes" id="UP000001425">
    <property type="component" value="Chromosome"/>
</dbReference>
<dbReference type="GO" id="GO:0005829">
    <property type="term" value="C:cytosol"/>
    <property type="evidence" value="ECO:0000318"/>
    <property type="project" value="GO_Central"/>
</dbReference>
<dbReference type="GO" id="GO:0004180">
    <property type="term" value="F:carboxypeptidase activity"/>
    <property type="evidence" value="ECO:0000318"/>
    <property type="project" value="GO_Central"/>
</dbReference>
<dbReference type="GO" id="GO:0008236">
    <property type="term" value="F:serine-type peptidase activity"/>
    <property type="evidence" value="ECO:0007669"/>
    <property type="project" value="UniProtKB-KW"/>
</dbReference>
<dbReference type="GO" id="GO:0006508">
    <property type="term" value="P:proteolysis"/>
    <property type="evidence" value="ECO:0007669"/>
    <property type="project" value="UniProtKB-KW"/>
</dbReference>
<dbReference type="CDD" id="cd07025">
    <property type="entry name" value="Peptidase_S66"/>
    <property type="match status" value="1"/>
</dbReference>
<dbReference type="Gene3D" id="3.40.50.10740">
    <property type="entry name" value="Class I glutamine amidotransferase-like"/>
    <property type="match status" value="1"/>
</dbReference>
<dbReference type="Gene3D" id="3.50.30.60">
    <property type="entry name" value="LD-carboxypeptidase A C-terminal domain-like"/>
    <property type="match status" value="1"/>
</dbReference>
<dbReference type="InterPro" id="IPR027461">
    <property type="entry name" value="Carboxypeptidase_A_C_sf"/>
</dbReference>
<dbReference type="InterPro" id="IPR029062">
    <property type="entry name" value="Class_I_gatase-like"/>
</dbReference>
<dbReference type="InterPro" id="IPR027478">
    <property type="entry name" value="LdcA_N"/>
</dbReference>
<dbReference type="InterPro" id="IPR040449">
    <property type="entry name" value="Peptidase_S66_N"/>
</dbReference>
<dbReference type="InterPro" id="IPR040921">
    <property type="entry name" value="Peptidase_S66C"/>
</dbReference>
<dbReference type="InterPro" id="IPR003507">
    <property type="entry name" value="S66_fam"/>
</dbReference>
<dbReference type="PANTHER" id="PTHR30237">
    <property type="entry name" value="MURAMOYLTETRAPEPTIDE CARBOXYPEPTIDASE"/>
    <property type="match status" value="1"/>
</dbReference>
<dbReference type="PANTHER" id="PTHR30237:SF2">
    <property type="entry name" value="MUREIN TETRAPEPTIDE CARBOXYPEPTIDASE"/>
    <property type="match status" value="1"/>
</dbReference>
<dbReference type="Pfam" id="PF02016">
    <property type="entry name" value="Peptidase_S66"/>
    <property type="match status" value="1"/>
</dbReference>
<dbReference type="Pfam" id="PF17676">
    <property type="entry name" value="Peptidase_S66C"/>
    <property type="match status" value="1"/>
</dbReference>
<dbReference type="PIRSF" id="PIRSF028757">
    <property type="entry name" value="LD-carboxypeptidase"/>
    <property type="match status" value="1"/>
</dbReference>
<dbReference type="SUPFAM" id="SSF52317">
    <property type="entry name" value="Class I glutamine amidotransferase-like"/>
    <property type="match status" value="1"/>
</dbReference>
<dbReference type="SUPFAM" id="SSF141986">
    <property type="entry name" value="LD-carboxypeptidase A C-terminal domain-like"/>
    <property type="match status" value="1"/>
</dbReference>
<evidence type="ECO:0000250" key="1"/>
<evidence type="ECO:0000305" key="2"/>
<accession>P74220</accession>
<protein>
    <recommendedName>
        <fullName>Putative carboxypeptidase slr1534</fullName>
        <ecNumber>3.4.16.-</ecNumber>
    </recommendedName>
</protein>
<reference key="1">
    <citation type="journal article" date="1996" name="DNA Res.">
        <title>Sequence analysis of the genome of the unicellular cyanobacterium Synechocystis sp. strain PCC6803. II. Sequence determination of the entire genome and assignment of potential protein-coding regions.</title>
        <authorList>
            <person name="Kaneko T."/>
            <person name="Sato S."/>
            <person name="Kotani H."/>
            <person name="Tanaka A."/>
            <person name="Asamizu E."/>
            <person name="Nakamura Y."/>
            <person name="Miyajima N."/>
            <person name="Hirosawa M."/>
            <person name="Sugiura M."/>
            <person name="Sasamoto S."/>
            <person name="Kimura T."/>
            <person name="Hosouchi T."/>
            <person name="Matsuno A."/>
            <person name="Muraki A."/>
            <person name="Nakazaki N."/>
            <person name="Naruo K."/>
            <person name="Okumura S."/>
            <person name="Shimpo S."/>
            <person name="Takeuchi C."/>
            <person name="Wada T."/>
            <person name="Watanabe A."/>
            <person name="Yamada M."/>
            <person name="Yasuda M."/>
            <person name="Tabata S."/>
        </authorList>
    </citation>
    <scope>NUCLEOTIDE SEQUENCE [LARGE SCALE GENOMIC DNA]</scope>
    <source>
        <strain>ATCC 27184 / PCC 6803 / Kazusa</strain>
    </source>
</reference>
<sequence>MSSLPKNFLQPLPLQPGDRLTVVSPSGSLRELADLQKGVDIWRSWGYEVIFSQGYHNRFGYLAGTDQQRRQDLLHAWLDPQCKGILCSRGGYGSARLLEDWQWPAISQPKWVLGFSDVTGILWSLLKSGIISLHGPVLTTLSDEPDWALERLRGHLQGLPLAPLTGNSWQKGMARGRLVAGNLTVATHFLGTEWQPDFENVILAIEDVTESPYRIDRMVTQWRASGNLSQVAGIALGRFSECEAPAGFPSWTVEEVLGDRLGDLGIPVVADLPFGHGGVNAILPVGSKAELDGDAGTLSFL</sequence>
<name>Y1534_SYNY3</name>
<feature type="chain" id="PRO_0000172846" description="Putative carboxypeptidase slr1534">
    <location>
        <begin position="1"/>
        <end position="301"/>
    </location>
</feature>
<feature type="active site" description="Nucleophile" evidence="1">
    <location>
        <position position="116"/>
    </location>
</feature>
<feature type="active site" description="Charge relay system" evidence="1">
    <location>
        <position position="206"/>
    </location>
</feature>
<feature type="active site" description="Charge relay system" evidence="1">
    <location>
        <position position="276"/>
    </location>
</feature>
<comment type="similarity">
    <text evidence="2">Belongs to the peptidase S66 family.</text>
</comment>
<proteinExistence type="inferred from homology"/>
<organism>
    <name type="scientific">Synechocystis sp. (strain ATCC 27184 / PCC 6803 / Kazusa)</name>
    <dbReference type="NCBI Taxonomy" id="1111708"/>
    <lineage>
        <taxon>Bacteria</taxon>
        <taxon>Bacillati</taxon>
        <taxon>Cyanobacteriota</taxon>
        <taxon>Cyanophyceae</taxon>
        <taxon>Synechococcales</taxon>
        <taxon>Merismopediaceae</taxon>
        <taxon>Synechocystis</taxon>
    </lineage>
</organism>